<accession>Q54S95</accession>
<keyword id="KW-0489">Methyltransferase</keyword>
<keyword id="KW-1185">Reference proteome</keyword>
<keyword id="KW-0949">S-adenosyl-L-methionine</keyword>
<keyword id="KW-0808">Transferase</keyword>
<feature type="chain" id="PRO_0000367585" description="O-methyltransferase 7">
    <location>
        <begin position="1"/>
        <end position="339"/>
    </location>
</feature>
<feature type="active site" description="Proton acceptor" evidence="1">
    <location>
        <position position="250"/>
    </location>
</feature>
<feature type="binding site" evidence="1">
    <location>
        <position position="186"/>
    </location>
    <ligand>
        <name>S-adenosyl-L-methionine</name>
        <dbReference type="ChEBI" id="CHEBI:59789"/>
    </ligand>
</feature>
<feature type="binding site" evidence="1">
    <location>
        <position position="209"/>
    </location>
    <ligand>
        <name>S-adenosyl-L-methionine</name>
        <dbReference type="ChEBI" id="CHEBI:59789"/>
    </ligand>
</feature>
<feature type="binding site" evidence="1">
    <location>
        <position position="232"/>
    </location>
    <ligand>
        <name>S-adenosyl-L-methionine</name>
        <dbReference type="ChEBI" id="CHEBI:59789"/>
    </ligand>
</feature>
<feature type="binding site" evidence="1">
    <location>
        <position position="233"/>
    </location>
    <ligand>
        <name>S-adenosyl-L-methionine</name>
        <dbReference type="ChEBI" id="CHEBI:59789"/>
    </ligand>
</feature>
<feature type="binding site" evidence="1">
    <location>
        <position position="246"/>
    </location>
    <ligand>
        <name>S-adenosyl-L-methionine</name>
        <dbReference type="ChEBI" id="CHEBI:59789"/>
    </ligand>
</feature>
<evidence type="ECO:0000255" key="1">
    <source>
        <dbReference type="PROSITE-ProRule" id="PRU01020"/>
    </source>
</evidence>
<protein>
    <recommendedName>
        <fullName>O-methyltransferase 7</fullName>
        <ecNumber>2.1.1.-</ecNumber>
    </recommendedName>
</protein>
<reference key="1">
    <citation type="journal article" date="2005" name="Nature">
        <title>The genome of the social amoeba Dictyostelium discoideum.</title>
        <authorList>
            <person name="Eichinger L."/>
            <person name="Pachebat J.A."/>
            <person name="Gloeckner G."/>
            <person name="Rajandream M.A."/>
            <person name="Sucgang R."/>
            <person name="Berriman M."/>
            <person name="Song J."/>
            <person name="Olsen R."/>
            <person name="Szafranski K."/>
            <person name="Xu Q."/>
            <person name="Tunggal B."/>
            <person name="Kummerfeld S."/>
            <person name="Madera M."/>
            <person name="Konfortov B.A."/>
            <person name="Rivero F."/>
            <person name="Bankier A.T."/>
            <person name="Lehmann R."/>
            <person name="Hamlin N."/>
            <person name="Davies R."/>
            <person name="Gaudet P."/>
            <person name="Fey P."/>
            <person name="Pilcher K."/>
            <person name="Chen G."/>
            <person name="Saunders D."/>
            <person name="Sodergren E.J."/>
            <person name="Davis P."/>
            <person name="Kerhornou A."/>
            <person name="Nie X."/>
            <person name="Hall N."/>
            <person name="Anjard C."/>
            <person name="Hemphill L."/>
            <person name="Bason N."/>
            <person name="Farbrother P."/>
            <person name="Desany B."/>
            <person name="Just E."/>
            <person name="Morio T."/>
            <person name="Rost R."/>
            <person name="Churcher C.M."/>
            <person name="Cooper J."/>
            <person name="Haydock S."/>
            <person name="van Driessche N."/>
            <person name="Cronin A."/>
            <person name="Goodhead I."/>
            <person name="Muzny D.M."/>
            <person name="Mourier T."/>
            <person name="Pain A."/>
            <person name="Lu M."/>
            <person name="Harper D."/>
            <person name="Lindsay R."/>
            <person name="Hauser H."/>
            <person name="James K.D."/>
            <person name="Quiles M."/>
            <person name="Madan Babu M."/>
            <person name="Saito T."/>
            <person name="Buchrieser C."/>
            <person name="Wardroper A."/>
            <person name="Felder M."/>
            <person name="Thangavelu M."/>
            <person name="Johnson D."/>
            <person name="Knights A."/>
            <person name="Loulseged H."/>
            <person name="Mungall K.L."/>
            <person name="Oliver K."/>
            <person name="Price C."/>
            <person name="Quail M.A."/>
            <person name="Urushihara H."/>
            <person name="Hernandez J."/>
            <person name="Rabbinowitsch E."/>
            <person name="Steffen D."/>
            <person name="Sanders M."/>
            <person name="Ma J."/>
            <person name="Kohara Y."/>
            <person name="Sharp S."/>
            <person name="Simmonds M.N."/>
            <person name="Spiegler S."/>
            <person name="Tivey A."/>
            <person name="Sugano S."/>
            <person name="White B."/>
            <person name="Walker D."/>
            <person name="Woodward J.R."/>
            <person name="Winckler T."/>
            <person name="Tanaka Y."/>
            <person name="Shaulsky G."/>
            <person name="Schleicher M."/>
            <person name="Weinstock G.M."/>
            <person name="Rosenthal A."/>
            <person name="Cox E.C."/>
            <person name="Chisholm R.L."/>
            <person name="Gibbs R.A."/>
            <person name="Loomis W.F."/>
            <person name="Platzer M."/>
            <person name="Kay R.R."/>
            <person name="Williams J.G."/>
            <person name="Dear P.H."/>
            <person name="Noegel A.A."/>
            <person name="Barrell B.G."/>
            <person name="Kuspa A."/>
        </authorList>
    </citation>
    <scope>NUCLEOTIDE SEQUENCE [LARGE SCALE GENOMIC DNA]</scope>
    <source>
        <strain>AX4</strain>
    </source>
</reference>
<gene>
    <name type="primary">omt7</name>
    <name type="ORF">DDB_G0282591</name>
</gene>
<dbReference type="EC" id="2.1.1.-"/>
<dbReference type="EMBL" id="AAFI02000047">
    <property type="protein sequence ID" value="EAL66155.1"/>
    <property type="molecule type" value="Genomic_DNA"/>
</dbReference>
<dbReference type="RefSeq" id="XP_640144.1">
    <property type="nucleotide sequence ID" value="XM_635052.1"/>
</dbReference>
<dbReference type="SMR" id="Q54S95"/>
<dbReference type="PaxDb" id="44689-DDB0266733"/>
<dbReference type="EnsemblProtists" id="EAL66155">
    <property type="protein sequence ID" value="EAL66155"/>
    <property type="gene ID" value="DDB_G0282591"/>
</dbReference>
<dbReference type="GeneID" id="8623681"/>
<dbReference type="KEGG" id="ddi:DDB_G0282591"/>
<dbReference type="dictyBase" id="DDB_G0282591">
    <property type="gene designation" value="omt7"/>
</dbReference>
<dbReference type="VEuPathDB" id="AmoebaDB:DDB_G0282591"/>
<dbReference type="eggNOG" id="KOG3178">
    <property type="taxonomic scope" value="Eukaryota"/>
</dbReference>
<dbReference type="HOGENOM" id="CLU_005533_12_0_1"/>
<dbReference type="InParanoid" id="Q54S95"/>
<dbReference type="OMA" id="TMIMEER"/>
<dbReference type="PhylomeDB" id="Q54S95"/>
<dbReference type="PRO" id="PR:Q54S95"/>
<dbReference type="Proteomes" id="UP000002195">
    <property type="component" value="Chromosome 3"/>
</dbReference>
<dbReference type="GO" id="GO:0106268">
    <property type="term" value="F:3,5-dichloro-THPH methyl transferase activity"/>
    <property type="evidence" value="ECO:0007669"/>
    <property type="project" value="RHEA"/>
</dbReference>
<dbReference type="GO" id="GO:0008171">
    <property type="term" value="F:O-methyltransferase activity"/>
    <property type="evidence" value="ECO:0000318"/>
    <property type="project" value="GO_Central"/>
</dbReference>
<dbReference type="GO" id="GO:0008757">
    <property type="term" value="F:S-adenosylmethionine-dependent methyltransferase activity"/>
    <property type="evidence" value="ECO:0000318"/>
    <property type="project" value="GO_Central"/>
</dbReference>
<dbReference type="GO" id="GO:0009058">
    <property type="term" value="P:biosynthetic process"/>
    <property type="evidence" value="ECO:0000318"/>
    <property type="project" value="GO_Central"/>
</dbReference>
<dbReference type="GO" id="GO:0032259">
    <property type="term" value="P:methylation"/>
    <property type="evidence" value="ECO:0000318"/>
    <property type="project" value="GO_Central"/>
</dbReference>
<dbReference type="FunFam" id="3.40.50.150:FF:000407">
    <property type="entry name" value="O-methyltransferase 4"/>
    <property type="match status" value="1"/>
</dbReference>
<dbReference type="FunFam" id="1.10.10.10:FF:000895">
    <property type="entry name" value="O-methyltransferase 9"/>
    <property type="match status" value="1"/>
</dbReference>
<dbReference type="Gene3D" id="3.40.50.150">
    <property type="entry name" value="Vaccinia Virus protein VP39"/>
    <property type="match status" value="1"/>
</dbReference>
<dbReference type="Gene3D" id="1.10.10.10">
    <property type="entry name" value="Winged helix-like DNA-binding domain superfamily/Winged helix DNA-binding domain"/>
    <property type="match status" value="1"/>
</dbReference>
<dbReference type="InterPro" id="IPR016461">
    <property type="entry name" value="COMT-like"/>
</dbReference>
<dbReference type="InterPro" id="IPR001077">
    <property type="entry name" value="O_MeTrfase_dom"/>
</dbReference>
<dbReference type="InterPro" id="IPR029063">
    <property type="entry name" value="SAM-dependent_MTases_sf"/>
</dbReference>
<dbReference type="InterPro" id="IPR036388">
    <property type="entry name" value="WH-like_DNA-bd_sf"/>
</dbReference>
<dbReference type="InterPro" id="IPR036390">
    <property type="entry name" value="WH_DNA-bd_sf"/>
</dbReference>
<dbReference type="PANTHER" id="PTHR43712:SF2">
    <property type="entry name" value="O-METHYLTRANSFERASE CICE"/>
    <property type="match status" value="1"/>
</dbReference>
<dbReference type="PANTHER" id="PTHR43712">
    <property type="entry name" value="PUTATIVE (AFU_ORTHOLOGUE AFUA_4G14580)-RELATED"/>
    <property type="match status" value="1"/>
</dbReference>
<dbReference type="Pfam" id="PF00891">
    <property type="entry name" value="Methyltransf_2"/>
    <property type="match status" value="1"/>
</dbReference>
<dbReference type="PIRSF" id="PIRSF005739">
    <property type="entry name" value="O-mtase"/>
    <property type="match status" value="1"/>
</dbReference>
<dbReference type="SUPFAM" id="SSF53335">
    <property type="entry name" value="S-adenosyl-L-methionine-dependent methyltransferases"/>
    <property type="match status" value="1"/>
</dbReference>
<dbReference type="SUPFAM" id="SSF46785">
    <property type="entry name" value="Winged helix' DNA-binding domain"/>
    <property type="match status" value="1"/>
</dbReference>
<dbReference type="PROSITE" id="PS51683">
    <property type="entry name" value="SAM_OMT_II"/>
    <property type="match status" value="1"/>
</dbReference>
<comment type="catalytic activity">
    <reaction>
        <text>(3,5-dichloro-2,4,6-trihydroxyphenyl)hexan-1-one + S-adenosyl-L-methionine = 1-(3,5-dichloro-2,6-dihydroxy-4-methoxyphenyl)hexan-1-one + S-adenosyl-L-homocysteine + H(+)</text>
        <dbReference type="Rhea" id="RHEA:48396"/>
        <dbReference type="ChEBI" id="CHEBI:15378"/>
        <dbReference type="ChEBI" id="CHEBI:57856"/>
        <dbReference type="ChEBI" id="CHEBI:59789"/>
        <dbReference type="ChEBI" id="CHEBI:90397"/>
        <dbReference type="ChEBI" id="CHEBI:90398"/>
    </reaction>
</comment>
<comment type="similarity">
    <text evidence="1">Belongs to the class I-like SAM-binding methyltransferase superfamily. Cation-independent O-methyltransferase family. COMT subfamily.</text>
</comment>
<proteinExistence type="inferred from homology"/>
<name>OMT7_DICDI</name>
<sequence length="339" mass="39662">MESNDLNKESLENWNESWDLVMTFGMGHLTSKLFNILMNNSIFDMINESPKHYKEIAKIINFNEFSCYRLLRYFVPYGLFEENNEIFSITNKSKKLIKSGGIYNLCTFFSSNDYFKLYSTIPESFEQNKNLGPSSFGFDDFWDIVKTNEHFKYSFNQEMREFSNLSIPTIIKNTDFSSFNTVVDVGGSHGRIVGELVKKYENLNGIVFDLETVINSSIEKIKHPRIEYVSGSFFESVPSADCYVLKNILHDWDDEKCLEILKTISKSMKENSKIFIFDEIIDPNDYRKLSLFLDVTVFHFFNSRERSLNDWKQLCDKSDFKIDSINNVTQPQLLILSKK</sequence>
<organism>
    <name type="scientific">Dictyostelium discoideum</name>
    <name type="common">Social amoeba</name>
    <dbReference type="NCBI Taxonomy" id="44689"/>
    <lineage>
        <taxon>Eukaryota</taxon>
        <taxon>Amoebozoa</taxon>
        <taxon>Evosea</taxon>
        <taxon>Eumycetozoa</taxon>
        <taxon>Dictyostelia</taxon>
        <taxon>Dictyosteliales</taxon>
        <taxon>Dictyosteliaceae</taxon>
        <taxon>Dictyostelium</taxon>
    </lineage>
</organism>